<accession>Q13WN4</accession>
<protein>
    <recommendedName>
        <fullName evidence="1">Phosphomethylpyrimidine synthase</fullName>
        <ecNumber evidence="1">4.1.99.17</ecNumber>
    </recommendedName>
    <alternativeName>
        <fullName evidence="1">Hydroxymethylpyrimidine phosphate synthase</fullName>
        <shortName evidence="1">HMP-P synthase</shortName>
        <shortName evidence="1">HMP-phosphate synthase</shortName>
        <shortName evidence="1">HMPP synthase</shortName>
    </alternativeName>
    <alternativeName>
        <fullName evidence="1">Thiamine biosynthesis protein ThiC</fullName>
    </alternativeName>
</protein>
<evidence type="ECO:0000255" key="1">
    <source>
        <dbReference type="HAMAP-Rule" id="MF_00089"/>
    </source>
</evidence>
<dbReference type="EC" id="4.1.99.17" evidence="1"/>
<dbReference type="EMBL" id="CP000270">
    <property type="protein sequence ID" value="ABE31505.1"/>
    <property type="molecule type" value="Genomic_DNA"/>
</dbReference>
<dbReference type="RefSeq" id="WP_011489077.1">
    <property type="nucleotide sequence ID" value="NC_007951.1"/>
</dbReference>
<dbReference type="SMR" id="Q13WN4"/>
<dbReference type="STRING" id="266265.Bxe_A1449"/>
<dbReference type="KEGG" id="bxb:DR64_3614"/>
<dbReference type="KEGG" id="bxe:Bxe_A1449"/>
<dbReference type="PATRIC" id="fig|266265.5.peg.3116"/>
<dbReference type="eggNOG" id="COG0422">
    <property type="taxonomic scope" value="Bacteria"/>
</dbReference>
<dbReference type="OrthoDB" id="9805897at2"/>
<dbReference type="UniPathway" id="UPA00060"/>
<dbReference type="Proteomes" id="UP000001817">
    <property type="component" value="Chromosome 1"/>
</dbReference>
<dbReference type="GO" id="GO:0005829">
    <property type="term" value="C:cytosol"/>
    <property type="evidence" value="ECO:0007669"/>
    <property type="project" value="TreeGrafter"/>
</dbReference>
<dbReference type="GO" id="GO:0051539">
    <property type="term" value="F:4 iron, 4 sulfur cluster binding"/>
    <property type="evidence" value="ECO:0007669"/>
    <property type="project" value="UniProtKB-KW"/>
</dbReference>
<dbReference type="GO" id="GO:0016830">
    <property type="term" value="F:carbon-carbon lyase activity"/>
    <property type="evidence" value="ECO:0007669"/>
    <property type="project" value="InterPro"/>
</dbReference>
<dbReference type="GO" id="GO:0008270">
    <property type="term" value="F:zinc ion binding"/>
    <property type="evidence" value="ECO:0007669"/>
    <property type="project" value="UniProtKB-UniRule"/>
</dbReference>
<dbReference type="GO" id="GO:0009228">
    <property type="term" value="P:thiamine biosynthetic process"/>
    <property type="evidence" value="ECO:0007669"/>
    <property type="project" value="UniProtKB-KW"/>
</dbReference>
<dbReference type="GO" id="GO:0009229">
    <property type="term" value="P:thiamine diphosphate biosynthetic process"/>
    <property type="evidence" value="ECO:0007669"/>
    <property type="project" value="UniProtKB-UniRule"/>
</dbReference>
<dbReference type="FunFam" id="3.20.20.540:FF:000001">
    <property type="entry name" value="Phosphomethylpyrimidine synthase"/>
    <property type="match status" value="1"/>
</dbReference>
<dbReference type="Gene3D" id="6.10.250.620">
    <property type="match status" value="1"/>
</dbReference>
<dbReference type="Gene3D" id="3.20.20.540">
    <property type="entry name" value="Radical SAM ThiC family, central domain"/>
    <property type="match status" value="1"/>
</dbReference>
<dbReference type="HAMAP" id="MF_00089">
    <property type="entry name" value="ThiC"/>
    <property type="match status" value="1"/>
</dbReference>
<dbReference type="InterPro" id="IPR037509">
    <property type="entry name" value="ThiC"/>
</dbReference>
<dbReference type="InterPro" id="IPR025747">
    <property type="entry name" value="ThiC-associated_dom"/>
</dbReference>
<dbReference type="InterPro" id="IPR038521">
    <property type="entry name" value="ThiC/Bza_core_dom"/>
</dbReference>
<dbReference type="InterPro" id="IPR002817">
    <property type="entry name" value="ThiC/BzaA/B"/>
</dbReference>
<dbReference type="NCBIfam" id="NF006763">
    <property type="entry name" value="PRK09284.1"/>
    <property type="match status" value="1"/>
</dbReference>
<dbReference type="NCBIfam" id="NF009895">
    <property type="entry name" value="PRK13352.1"/>
    <property type="match status" value="1"/>
</dbReference>
<dbReference type="NCBIfam" id="TIGR00190">
    <property type="entry name" value="thiC"/>
    <property type="match status" value="1"/>
</dbReference>
<dbReference type="PANTHER" id="PTHR30557:SF1">
    <property type="entry name" value="PHOSPHOMETHYLPYRIMIDINE SYNTHASE, CHLOROPLASTIC"/>
    <property type="match status" value="1"/>
</dbReference>
<dbReference type="PANTHER" id="PTHR30557">
    <property type="entry name" value="THIAMINE BIOSYNTHESIS PROTEIN THIC"/>
    <property type="match status" value="1"/>
</dbReference>
<dbReference type="Pfam" id="PF13667">
    <property type="entry name" value="ThiC-associated"/>
    <property type="match status" value="1"/>
</dbReference>
<dbReference type="Pfam" id="PF01964">
    <property type="entry name" value="ThiC_Rad_SAM"/>
    <property type="match status" value="1"/>
</dbReference>
<dbReference type="SFLD" id="SFLDF00407">
    <property type="entry name" value="phosphomethylpyrimidine_syntha"/>
    <property type="match status" value="1"/>
</dbReference>
<dbReference type="SFLD" id="SFLDG01114">
    <property type="entry name" value="phosphomethylpyrimidine_syntha"/>
    <property type="match status" value="1"/>
</dbReference>
<dbReference type="SFLD" id="SFLDS00113">
    <property type="entry name" value="Radical_SAM_Phosphomethylpyrim"/>
    <property type="match status" value="1"/>
</dbReference>
<organism>
    <name type="scientific">Paraburkholderia xenovorans (strain LB400)</name>
    <dbReference type="NCBI Taxonomy" id="266265"/>
    <lineage>
        <taxon>Bacteria</taxon>
        <taxon>Pseudomonadati</taxon>
        <taxon>Pseudomonadota</taxon>
        <taxon>Betaproteobacteria</taxon>
        <taxon>Burkholderiales</taxon>
        <taxon>Burkholderiaceae</taxon>
        <taxon>Paraburkholderia</taxon>
    </lineage>
</organism>
<feature type="chain" id="PRO_1000004747" description="Phosphomethylpyrimidine synthase">
    <location>
        <begin position="1"/>
        <end position="643"/>
    </location>
</feature>
<feature type="binding site" evidence="1">
    <location>
        <position position="248"/>
    </location>
    <ligand>
        <name>substrate</name>
    </ligand>
</feature>
<feature type="binding site" evidence="1">
    <location>
        <position position="277"/>
    </location>
    <ligand>
        <name>substrate</name>
    </ligand>
</feature>
<feature type="binding site" evidence="1">
    <location>
        <position position="306"/>
    </location>
    <ligand>
        <name>substrate</name>
    </ligand>
</feature>
<feature type="binding site" evidence="1">
    <location>
        <position position="342"/>
    </location>
    <ligand>
        <name>substrate</name>
    </ligand>
</feature>
<feature type="binding site" evidence="1">
    <location>
        <begin position="362"/>
        <end position="364"/>
    </location>
    <ligand>
        <name>substrate</name>
    </ligand>
</feature>
<feature type="binding site" evidence="1">
    <location>
        <begin position="403"/>
        <end position="406"/>
    </location>
    <ligand>
        <name>substrate</name>
    </ligand>
</feature>
<feature type="binding site" evidence="1">
    <location>
        <position position="442"/>
    </location>
    <ligand>
        <name>substrate</name>
    </ligand>
</feature>
<feature type="binding site" evidence="1">
    <location>
        <position position="446"/>
    </location>
    <ligand>
        <name>Zn(2+)</name>
        <dbReference type="ChEBI" id="CHEBI:29105"/>
    </ligand>
</feature>
<feature type="binding site" evidence="1">
    <location>
        <position position="469"/>
    </location>
    <ligand>
        <name>substrate</name>
    </ligand>
</feature>
<feature type="binding site" evidence="1">
    <location>
        <position position="510"/>
    </location>
    <ligand>
        <name>Zn(2+)</name>
        <dbReference type="ChEBI" id="CHEBI:29105"/>
    </ligand>
</feature>
<feature type="binding site" evidence="1">
    <location>
        <position position="590"/>
    </location>
    <ligand>
        <name>[4Fe-4S] cluster</name>
        <dbReference type="ChEBI" id="CHEBI:49883"/>
        <note>4Fe-4S-S-AdoMet</note>
    </ligand>
</feature>
<feature type="binding site" evidence="1">
    <location>
        <position position="593"/>
    </location>
    <ligand>
        <name>[4Fe-4S] cluster</name>
        <dbReference type="ChEBI" id="CHEBI:49883"/>
        <note>4Fe-4S-S-AdoMet</note>
    </ligand>
</feature>
<feature type="binding site" evidence="1">
    <location>
        <position position="598"/>
    </location>
    <ligand>
        <name>[4Fe-4S] cluster</name>
        <dbReference type="ChEBI" id="CHEBI:49883"/>
        <note>4Fe-4S-S-AdoMet</note>
    </ligand>
</feature>
<name>THIC_PARXL</name>
<keyword id="KW-0004">4Fe-4S</keyword>
<keyword id="KW-0408">Iron</keyword>
<keyword id="KW-0411">Iron-sulfur</keyword>
<keyword id="KW-0456">Lyase</keyword>
<keyword id="KW-0479">Metal-binding</keyword>
<keyword id="KW-1185">Reference proteome</keyword>
<keyword id="KW-0949">S-adenosyl-L-methionine</keyword>
<keyword id="KW-0784">Thiamine biosynthesis</keyword>
<keyword id="KW-0862">Zinc</keyword>
<reference key="1">
    <citation type="journal article" date="2006" name="Proc. Natl. Acad. Sci. U.S.A.">
        <title>Burkholderia xenovorans LB400 harbors a multi-replicon, 9.73-Mbp genome shaped for versatility.</title>
        <authorList>
            <person name="Chain P.S.G."/>
            <person name="Denef V.J."/>
            <person name="Konstantinidis K.T."/>
            <person name="Vergez L.M."/>
            <person name="Agullo L."/>
            <person name="Reyes V.L."/>
            <person name="Hauser L."/>
            <person name="Cordova M."/>
            <person name="Gomez L."/>
            <person name="Gonzalez M."/>
            <person name="Land M."/>
            <person name="Lao V."/>
            <person name="Larimer F."/>
            <person name="LiPuma J.J."/>
            <person name="Mahenthiralingam E."/>
            <person name="Malfatti S.A."/>
            <person name="Marx C.J."/>
            <person name="Parnell J.J."/>
            <person name="Ramette A."/>
            <person name="Richardson P."/>
            <person name="Seeger M."/>
            <person name="Smith D."/>
            <person name="Spilker T."/>
            <person name="Sul W.J."/>
            <person name="Tsoi T.V."/>
            <person name="Ulrich L.E."/>
            <person name="Zhulin I.B."/>
            <person name="Tiedje J.M."/>
        </authorList>
    </citation>
    <scope>NUCLEOTIDE SEQUENCE [LARGE SCALE GENOMIC DNA]</scope>
    <source>
        <strain>LB400</strain>
    </source>
</reference>
<sequence>MNANPKFLSADAHVDEAAVAPLPNSRKVYVTGSRPDIRVPMREISQADTPDSFGGEKNPPVFVYDTSGPYSDPEARIDIRAGLPALRQAWIEERGDTEALTGLSSDFGRERAADTATADLRFQGLHRTPRRAIAGKNVSQMHYARKGIITPEMEYIAIRENQRRAEYLESLKTSGPNGEKLAAMMGRQHPGQAFGASAFGPNGLTEITPEFVREEVARGRAIIPNNINHPESEPMIIGRNFLVKVNANIGNSAVTSSIGEEVDKMTWAIRWGGDTVMDLSTGKHIHETREWIIRNSPVPIGTVPIYQALEKVNGKAEDLTWEIFRDTLIEQAEQGVDYFTIHAGVRLQYVPLTAKRMTGIVSRGGSIMAKWCLAHHKESFLYEHFEDICEIMKAYDVAFSLGDGLRPGSIYDANDEAQLGELKTLGELTQIAWKHDVQTMIEGPGHVPMQLIKENMDLQLEWCDEAPFYTLGPLTTDIAPGYDHITSGIGAAMIGWFGTAMLCYVTPKEHLGLPNKDDVKTGIITYKLAAHAADLAKGHPGAQVRDNALSKARFEFRWEDQFNLGLDPDKAREFHDETLPKDSAKVAHFCSMCGPHFCSMKITQDVREFAAQQGVTDDEALKKGMEVKSIEFMKKGAEIYQRQ</sequence>
<proteinExistence type="inferred from homology"/>
<gene>
    <name evidence="1" type="primary">thiC</name>
    <name type="ordered locus">Bxeno_A2967</name>
    <name type="ORF">Bxe_A1449</name>
</gene>
<comment type="function">
    <text evidence="1">Catalyzes the synthesis of the hydroxymethylpyrimidine phosphate (HMP-P) moiety of thiamine from aminoimidazole ribotide (AIR) in a radical S-adenosyl-L-methionine (SAM)-dependent reaction.</text>
</comment>
<comment type="catalytic activity">
    <reaction evidence="1">
        <text>5-amino-1-(5-phospho-beta-D-ribosyl)imidazole + S-adenosyl-L-methionine = 4-amino-2-methyl-5-(phosphooxymethyl)pyrimidine + CO + 5'-deoxyadenosine + formate + L-methionine + 3 H(+)</text>
        <dbReference type="Rhea" id="RHEA:24840"/>
        <dbReference type="ChEBI" id="CHEBI:15378"/>
        <dbReference type="ChEBI" id="CHEBI:15740"/>
        <dbReference type="ChEBI" id="CHEBI:17245"/>
        <dbReference type="ChEBI" id="CHEBI:17319"/>
        <dbReference type="ChEBI" id="CHEBI:57844"/>
        <dbReference type="ChEBI" id="CHEBI:58354"/>
        <dbReference type="ChEBI" id="CHEBI:59789"/>
        <dbReference type="ChEBI" id="CHEBI:137981"/>
        <dbReference type="EC" id="4.1.99.17"/>
    </reaction>
</comment>
<comment type="cofactor">
    <cofactor evidence="1">
        <name>[4Fe-4S] cluster</name>
        <dbReference type="ChEBI" id="CHEBI:49883"/>
    </cofactor>
    <text evidence="1">Binds 1 [4Fe-4S] cluster per subunit. The cluster is coordinated with 3 cysteines and an exchangeable S-adenosyl-L-methionine.</text>
</comment>
<comment type="pathway">
    <text evidence="1">Cofactor biosynthesis; thiamine diphosphate biosynthesis.</text>
</comment>
<comment type="subunit">
    <text evidence="1">Homodimer.</text>
</comment>
<comment type="similarity">
    <text evidence="1">Belongs to the ThiC family.</text>
</comment>